<keyword id="KW-0472">Membrane</keyword>
<keyword id="KW-0520">NAD</keyword>
<keyword id="KW-0521">NADP</keyword>
<keyword id="KW-0618">Plastoquinone</keyword>
<keyword id="KW-0874">Quinone</keyword>
<keyword id="KW-0793">Thylakoid</keyword>
<keyword id="KW-1278">Translocase</keyword>
<keyword id="KW-0813">Transport</keyword>
<reference key="1">
    <citation type="journal article" date="2003" name="Nature">
        <title>The genome of a motile marine Synechococcus.</title>
        <authorList>
            <person name="Palenik B."/>
            <person name="Brahamsha B."/>
            <person name="Larimer F.W."/>
            <person name="Land M.L."/>
            <person name="Hauser L."/>
            <person name="Chain P."/>
            <person name="Lamerdin J.E."/>
            <person name="Regala W."/>
            <person name="Allen E.E."/>
            <person name="McCarren J."/>
            <person name="Paulsen I.T."/>
            <person name="Dufresne A."/>
            <person name="Partensky F."/>
            <person name="Webb E.A."/>
            <person name="Waterbury J."/>
        </authorList>
    </citation>
    <scope>NUCLEOTIDE SEQUENCE [LARGE SCALE GENOMIC DNA]</scope>
    <source>
        <strain>WH8102</strain>
    </source>
</reference>
<protein>
    <recommendedName>
        <fullName evidence="1">NAD(P)H-quinone oxidoreductase subunit J</fullName>
        <ecNumber evidence="1">7.1.1.-</ecNumber>
    </recommendedName>
    <alternativeName>
        <fullName>NAD(P)H dehydrogenase subunit J</fullName>
    </alternativeName>
    <alternativeName>
        <fullName evidence="1">NADH-plastoquinone oxidoreductase subunit J</fullName>
    </alternativeName>
    <alternativeName>
        <fullName evidence="1">NDH-1 subunit J</fullName>
        <shortName evidence="1">NDH-J</shortName>
    </alternativeName>
</protein>
<dbReference type="EC" id="7.1.1.-" evidence="1"/>
<dbReference type="EMBL" id="BX569689">
    <property type="protein sequence ID" value="CAE06724.1"/>
    <property type="molecule type" value="Genomic_DNA"/>
</dbReference>
<dbReference type="RefSeq" id="WP_011127085.1">
    <property type="nucleotide sequence ID" value="NC_005070.1"/>
</dbReference>
<dbReference type="SMR" id="Q7U9P4"/>
<dbReference type="STRING" id="84588.SYNW0209"/>
<dbReference type="KEGG" id="syw:SYNW0209"/>
<dbReference type="eggNOG" id="COG0852">
    <property type="taxonomic scope" value="Bacteria"/>
</dbReference>
<dbReference type="HOGENOM" id="CLU_042628_9_1_3"/>
<dbReference type="BioCyc" id="MetaCyc:TX72_RS01040-MONOMER"/>
<dbReference type="Proteomes" id="UP000001422">
    <property type="component" value="Chromosome"/>
</dbReference>
<dbReference type="GO" id="GO:0031676">
    <property type="term" value="C:plasma membrane-derived thylakoid membrane"/>
    <property type="evidence" value="ECO:0007669"/>
    <property type="project" value="UniProtKB-SubCell"/>
</dbReference>
<dbReference type="GO" id="GO:0008137">
    <property type="term" value="F:NADH dehydrogenase (ubiquinone) activity"/>
    <property type="evidence" value="ECO:0007669"/>
    <property type="project" value="InterPro"/>
</dbReference>
<dbReference type="GO" id="GO:0048038">
    <property type="term" value="F:quinone binding"/>
    <property type="evidence" value="ECO:0007669"/>
    <property type="project" value="UniProtKB-KW"/>
</dbReference>
<dbReference type="GO" id="GO:0019684">
    <property type="term" value="P:photosynthesis, light reaction"/>
    <property type="evidence" value="ECO:0007669"/>
    <property type="project" value="UniProtKB-UniRule"/>
</dbReference>
<dbReference type="Gene3D" id="3.30.460.80">
    <property type="entry name" value="NADH:ubiquinone oxidoreductase, 30kDa subunit"/>
    <property type="match status" value="1"/>
</dbReference>
<dbReference type="HAMAP" id="MF_01357">
    <property type="entry name" value="NDH1_NuoC"/>
    <property type="match status" value="1"/>
</dbReference>
<dbReference type="InterPro" id="IPR010218">
    <property type="entry name" value="NADH_DH_suC"/>
</dbReference>
<dbReference type="InterPro" id="IPR037232">
    <property type="entry name" value="NADH_quin_OxRdtase_su_C/D-like"/>
</dbReference>
<dbReference type="InterPro" id="IPR001268">
    <property type="entry name" value="NADH_UbQ_OxRdtase_30kDa_su"/>
</dbReference>
<dbReference type="InterPro" id="IPR020396">
    <property type="entry name" value="NADH_UbQ_OxRdtase_CS"/>
</dbReference>
<dbReference type="NCBIfam" id="NF009141">
    <property type="entry name" value="PRK12494.1"/>
    <property type="match status" value="1"/>
</dbReference>
<dbReference type="PANTHER" id="PTHR10884:SF14">
    <property type="entry name" value="NADH DEHYDROGENASE [UBIQUINONE] IRON-SULFUR PROTEIN 3, MITOCHONDRIAL"/>
    <property type="match status" value="1"/>
</dbReference>
<dbReference type="PANTHER" id="PTHR10884">
    <property type="entry name" value="NADH DEHYDROGENASE UBIQUINONE IRON-SULFUR PROTEIN 3"/>
    <property type="match status" value="1"/>
</dbReference>
<dbReference type="Pfam" id="PF00329">
    <property type="entry name" value="Complex1_30kDa"/>
    <property type="match status" value="1"/>
</dbReference>
<dbReference type="SUPFAM" id="SSF143243">
    <property type="entry name" value="Nqo5-like"/>
    <property type="match status" value="1"/>
</dbReference>
<dbReference type="PROSITE" id="PS00542">
    <property type="entry name" value="COMPLEX1_30K"/>
    <property type="match status" value="1"/>
</dbReference>
<accession>Q7U9P4</accession>
<comment type="function">
    <text evidence="1">NDH-1 shuttles electrons from an unknown electron donor, via FMN and iron-sulfur (Fe-S) centers, to quinones in the respiratory and/or the photosynthetic chain. The immediate electron acceptor for the enzyme in this species is believed to be plastoquinone. Couples the redox reaction to proton translocation, and thus conserves the redox energy in a proton gradient. Cyanobacterial NDH-1 also plays a role in inorganic carbon-concentration.</text>
</comment>
<comment type="catalytic activity">
    <reaction evidence="1">
        <text>a plastoquinone + NADH + (n+1) H(+)(in) = a plastoquinol + NAD(+) + n H(+)(out)</text>
        <dbReference type="Rhea" id="RHEA:42608"/>
        <dbReference type="Rhea" id="RHEA-COMP:9561"/>
        <dbReference type="Rhea" id="RHEA-COMP:9562"/>
        <dbReference type="ChEBI" id="CHEBI:15378"/>
        <dbReference type="ChEBI" id="CHEBI:17757"/>
        <dbReference type="ChEBI" id="CHEBI:57540"/>
        <dbReference type="ChEBI" id="CHEBI:57945"/>
        <dbReference type="ChEBI" id="CHEBI:62192"/>
    </reaction>
</comment>
<comment type="catalytic activity">
    <reaction evidence="1">
        <text>a plastoquinone + NADPH + (n+1) H(+)(in) = a plastoquinol + NADP(+) + n H(+)(out)</text>
        <dbReference type="Rhea" id="RHEA:42612"/>
        <dbReference type="Rhea" id="RHEA-COMP:9561"/>
        <dbReference type="Rhea" id="RHEA-COMP:9562"/>
        <dbReference type="ChEBI" id="CHEBI:15378"/>
        <dbReference type="ChEBI" id="CHEBI:17757"/>
        <dbReference type="ChEBI" id="CHEBI:57783"/>
        <dbReference type="ChEBI" id="CHEBI:58349"/>
        <dbReference type="ChEBI" id="CHEBI:62192"/>
    </reaction>
</comment>
<comment type="subunit">
    <text evidence="1">NDH-1 can be composed of about 15 different subunits; different subcomplexes with different compositions have been identified which probably have different functions.</text>
</comment>
<comment type="subcellular location">
    <subcellularLocation>
        <location evidence="1">Cellular thylakoid membrane</location>
        <topology evidence="1">Peripheral membrane protein</topology>
        <orientation evidence="1">Cytoplasmic side</orientation>
    </subcellularLocation>
</comment>
<comment type="similarity">
    <text evidence="1">Belongs to the complex I 30 kDa subunit family.</text>
</comment>
<gene>
    <name evidence="1" type="primary">ndhJ</name>
    <name type="ordered locus">SYNW0209</name>
</gene>
<organism>
    <name type="scientific">Parasynechococcus marenigrum (strain WH8102)</name>
    <dbReference type="NCBI Taxonomy" id="84588"/>
    <lineage>
        <taxon>Bacteria</taxon>
        <taxon>Bacillati</taxon>
        <taxon>Cyanobacteriota</taxon>
        <taxon>Cyanophyceae</taxon>
        <taxon>Synechococcales</taxon>
        <taxon>Prochlorococcaceae</taxon>
        <taxon>Parasynechococcus</taxon>
        <taxon>Parasynechococcus marenigrum</taxon>
    </lineage>
</organism>
<name>NDHJ_PARMW</name>
<sequence length="188" mass="21052">MSETSKIPPASTEDTSAVVAPAAGPVSQWLQQQGFEHQALEPDHVGIEQIGVDAAVLPIIAAALKSNGFDYLQCHGGYDEGPGERLVCFYHLLAMAEQLEAMASDPAAQLREVRLKVFLSREGTPVLPSIYGLFRGADWQERETFDMYGIQFDGHPHPKRLLMPEDWKGWPLRKDYVQPDFYEMQDAY</sequence>
<evidence type="ECO:0000255" key="1">
    <source>
        <dbReference type="HAMAP-Rule" id="MF_01357"/>
    </source>
</evidence>
<proteinExistence type="inferred from homology"/>
<feature type="chain" id="PRO_0000358214" description="NAD(P)H-quinone oxidoreductase subunit J">
    <location>
        <begin position="1"/>
        <end position="188"/>
    </location>
</feature>